<accession>Q3IST1</accession>
<protein>
    <recommendedName>
        <fullName evidence="1">HGPRTase-like protein</fullName>
        <ecNumber evidence="1">2.4.2.-</ecNumber>
    </recommendedName>
</protein>
<feature type="chain" id="PRO_0000415490" description="HGPRTase-like protein">
    <location>
        <begin position="1"/>
        <end position="189"/>
    </location>
</feature>
<name>HPRL_NATPD</name>
<gene>
    <name type="ordered locus">NP_1426A</name>
</gene>
<sequence>MDQLQQSLLEAPIIEKDGYHYFVHPISDGVPMLEPNLLREIVIKIIRKAQLENVDKIVTPAAMGIHISTAVSLMTDIPLVVIRKREYGLDGETPLFQQTGYSENQMYINDVDEGDSVLVLDDVLSTGGTLSAICSALEDIGADIVDVVAVIKKVGGENELESSPYSAKTLINVDVEDGEVVIIDSNGDN</sequence>
<evidence type="ECO:0000255" key="1">
    <source>
        <dbReference type="HAMAP-Rule" id="MF_01467"/>
    </source>
</evidence>
<comment type="function">
    <text evidence="1">May catalyze a purine salvage reaction, the substrate is unknown.</text>
</comment>
<comment type="similarity">
    <text evidence="1">Belongs to the purine/pyrimidine phosphoribosyltransferase family. Archaeal HPRT subfamily.</text>
</comment>
<reference key="1">
    <citation type="journal article" date="2005" name="Genome Res.">
        <title>Living with two extremes: conclusions from the genome sequence of Natronomonas pharaonis.</title>
        <authorList>
            <person name="Falb M."/>
            <person name="Pfeiffer F."/>
            <person name="Palm P."/>
            <person name="Rodewald K."/>
            <person name="Hickmann V."/>
            <person name="Tittor J."/>
            <person name="Oesterhelt D."/>
        </authorList>
    </citation>
    <scope>NUCLEOTIDE SEQUENCE [LARGE SCALE GENOMIC DNA]</scope>
    <source>
        <strain>ATCC 35678 / DSM 2160 / CIP 103997 / JCM 8858 / NBRC 14720 / NCIMB 2260 / Gabara</strain>
    </source>
</reference>
<proteinExistence type="inferred from homology"/>
<dbReference type="EC" id="2.4.2.-" evidence="1"/>
<dbReference type="EMBL" id="CR936257">
    <property type="protein sequence ID" value="CAI48804.1"/>
    <property type="molecule type" value="Genomic_DNA"/>
</dbReference>
<dbReference type="RefSeq" id="WP_011322439.1">
    <property type="nucleotide sequence ID" value="NC_007426.1"/>
</dbReference>
<dbReference type="SMR" id="Q3IST1"/>
<dbReference type="STRING" id="348780.NP_1426A"/>
<dbReference type="EnsemblBacteria" id="CAI48804">
    <property type="protein sequence ID" value="CAI48804"/>
    <property type="gene ID" value="NP_1426A"/>
</dbReference>
<dbReference type="GeneID" id="3702512"/>
<dbReference type="KEGG" id="nph:NP_1426A"/>
<dbReference type="eggNOG" id="arCOG00030">
    <property type="taxonomic scope" value="Archaea"/>
</dbReference>
<dbReference type="HOGENOM" id="CLU_126376_0_0_2"/>
<dbReference type="OrthoDB" id="8323at2157"/>
<dbReference type="Proteomes" id="UP000002698">
    <property type="component" value="Chromosome"/>
</dbReference>
<dbReference type="GO" id="GO:0016740">
    <property type="term" value="F:transferase activity"/>
    <property type="evidence" value="ECO:0007669"/>
    <property type="project" value="UniProtKB-KW"/>
</dbReference>
<dbReference type="GO" id="GO:0006166">
    <property type="term" value="P:purine ribonucleoside salvage"/>
    <property type="evidence" value="ECO:0007669"/>
    <property type="project" value="UniProtKB-KW"/>
</dbReference>
<dbReference type="CDD" id="cd06223">
    <property type="entry name" value="PRTases_typeI"/>
    <property type="match status" value="1"/>
</dbReference>
<dbReference type="Gene3D" id="3.40.50.2020">
    <property type="match status" value="1"/>
</dbReference>
<dbReference type="HAMAP" id="MF_01467">
    <property type="entry name" value="Hypx_phosphoribosyltr"/>
    <property type="match status" value="1"/>
</dbReference>
<dbReference type="InterPro" id="IPR026597">
    <property type="entry name" value="HGPRTase-like"/>
</dbReference>
<dbReference type="InterPro" id="IPR000836">
    <property type="entry name" value="PRibTrfase_dom"/>
</dbReference>
<dbReference type="InterPro" id="IPR029057">
    <property type="entry name" value="PRTase-like"/>
</dbReference>
<dbReference type="InterPro" id="IPR050118">
    <property type="entry name" value="Pur/Pyrimidine_PRTase"/>
</dbReference>
<dbReference type="NCBIfam" id="NF040646">
    <property type="entry name" value="HPT_Archaea"/>
    <property type="match status" value="1"/>
</dbReference>
<dbReference type="NCBIfam" id="NF002635">
    <property type="entry name" value="PRK02304.1-4"/>
    <property type="match status" value="1"/>
</dbReference>
<dbReference type="PANTHER" id="PTHR43864">
    <property type="entry name" value="HYPOXANTHINE/GUANINE PHOSPHORIBOSYLTRANSFERASE"/>
    <property type="match status" value="1"/>
</dbReference>
<dbReference type="PANTHER" id="PTHR43864:SF1">
    <property type="entry name" value="XANTHINE PHOSPHORIBOSYLTRANSFERASE"/>
    <property type="match status" value="1"/>
</dbReference>
<dbReference type="Pfam" id="PF00156">
    <property type="entry name" value="Pribosyltran"/>
    <property type="match status" value="1"/>
</dbReference>
<dbReference type="SUPFAM" id="SSF53271">
    <property type="entry name" value="PRTase-like"/>
    <property type="match status" value="1"/>
</dbReference>
<dbReference type="PROSITE" id="PS00103">
    <property type="entry name" value="PUR_PYR_PR_TRANSFER"/>
    <property type="match status" value="1"/>
</dbReference>
<organism>
    <name type="scientific">Natronomonas pharaonis (strain ATCC 35678 / DSM 2160 / CIP 103997 / JCM 8858 / NBRC 14720 / NCIMB 2260 / Gabara)</name>
    <name type="common">Halobacterium pharaonis</name>
    <dbReference type="NCBI Taxonomy" id="348780"/>
    <lineage>
        <taxon>Archaea</taxon>
        <taxon>Methanobacteriati</taxon>
        <taxon>Methanobacteriota</taxon>
        <taxon>Stenosarchaea group</taxon>
        <taxon>Halobacteria</taxon>
        <taxon>Halobacteriales</taxon>
        <taxon>Haloarculaceae</taxon>
        <taxon>Natronomonas</taxon>
    </lineage>
</organism>
<keyword id="KW-0660">Purine salvage</keyword>
<keyword id="KW-1185">Reference proteome</keyword>
<keyword id="KW-0808">Transferase</keyword>